<organism>
    <name type="scientific">Chlorobium phaeobacteroides (strain BS1)</name>
    <dbReference type="NCBI Taxonomy" id="331678"/>
    <lineage>
        <taxon>Bacteria</taxon>
        <taxon>Pseudomonadati</taxon>
        <taxon>Chlorobiota</taxon>
        <taxon>Chlorobiia</taxon>
        <taxon>Chlorobiales</taxon>
        <taxon>Chlorobiaceae</taxon>
        <taxon>Chlorobium/Pelodictyon group</taxon>
        <taxon>Chlorobium</taxon>
    </lineage>
</organism>
<gene>
    <name evidence="1" type="primary">rplT</name>
    <name type="ordered locus">Cphamn1_0169</name>
</gene>
<comment type="function">
    <text evidence="1">Binds directly to 23S ribosomal RNA and is necessary for the in vitro assembly process of the 50S ribosomal subunit. It is not involved in the protein synthesizing functions of that subunit.</text>
</comment>
<comment type="similarity">
    <text evidence="1">Belongs to the bacterial ribosomal protein bL20 family.</text>
</comment>
<name>RL20_CHLPB</name>
<accession>B3EKG6</accession>
<reference key="1">
    <citation type="submission" date="2008-06" db="EMBL/GenBank/DDBJ databases">
        <title>Complete sequence of Chlorobium phaeobacteroides BS1.</title>
        <authorList>
            <consortium name="US DOE Joint Genome Institute"/>
            <person name="Lucas S."/>
            <person name="Copeland A."/>
            <person name="Lapidus A."/>
            <person name="Glavina del Rio T."/>
            <person name="Dalin E."/>
            <person name="Tice H."/>
            <person name="Bruce D."/>
            <person name="Goodwin L."/>
            <person name="Pitluck S."/>
            <person name="Schmutz J."/>
            <person name="Larimer F."/>
            <person name="Land M."/>
            <person name="Hauser L."/>
            <person name="Kyrpides N."/>
            <person name="Ovchinnikova G."/>
            <person name="Li T."/>
            <person name="Liu Z."/>
            <person name="Zhao F."/>
            <person name="Overmann J."/>
            <person name="Bryant D.A."/>
            <person name="Richardson P."/>
        </authorList>
    </citation>
    <scope>NUCLEOTIDE SEQUENCE [LARGE SCALE GENOMIC DNA]</scope>
    <source>
        <strain>BS1</strain>
    </source>
</reference>
<feature type="chain" id="PRO_1000122291" description="Large ribosomal subunit protein bL20">
    <location>
        <begin position="1"/>
        <end position="115"/>
    </location>
</feature>
<sequence>MPRATNSVASRARRKRILKKAKGYWGSRGTILTVAKHAVDKAEQYAYRDRRVKKRTFRSLWIMRINAAARENGTSYSRLMEAMNKKSIDINRKALAEIAVKDPAAFSQIVKSAMG</sequence>
<proteinExistence type="inferred from homology"/>
<protein>
    <recommendedName>
        <fullName evidence="1">Large ribosomal subunit protein bL20</fullName>
    </recommendedName>
    <alternativeName>
        <fullName evidence="2">50S ribosomal protein L20</fullName>
    </alternativeName>
</protein>
<dbReference type="EMBL" id="CP001101">
    <property type="protein sequence ID" value="ACE03144.1"/>
    <property type="molecule type" value="Genomic_DNA"/>
</dbReference>
<dbReference type="SMR" id="B3EKG6"/>
<dbReference type="STRING" id="331678.Cphamn1_0169"/>
<dbReference type="KEGG" id="cpb:Cphamn1_0169"/>
<dbReference type="eggNOG" id="COG0292">
    <property type="taxonomic scope" value="Bacteria"/>
</dbReference>
<dbReference type="HOGENOM" id="CLU_123265_0_1_10"/>
<dbReference type="OrthoDB" id="9808966at2"/>
<dbReference type="GO" id="GO:1990904">
    <property type="term" value="C:ribonucleoprotein complex"/>
    <property type="evidence" value="ECO:0007669"/>
    <property type="project" value="UniProtKB-KW"/>
</dbReference>
<dbReference type="GO" id="GO:0005840">
    <property type="term" value="C:ribosome"/>
    <property type="evidence" value="ECO:0007669"/>
    <property type="project" value="UniProtKB-KW"/>
</dbReference>
<dbReference type="GO" id="GO:0019843">
    <property type="term" value="F:rRNA binding"/>
    <property type="evidence" value="ECO:0007669"/>
    <property type="project" value="UniProtKB-UniRule"/>
</dbReference>
<dbReference type="GO" id="GO:0003735">
    <property type="term" value="F:structural constituent of ribosome"/>
    <property type="evidence" value="ECO:0007669"/>
    <property type="project" value="InterPro"/>
</dbReference>
<dbReference type="GO" id="GO:0000027">
    <property type="term" value="P:ribosomal large subunit assembly"/>
    <property type="evidence" value="ECO:0007669"/>
    <property type="project" value="UniProtKB-UniRule"/>
</dbReference>
<dbReference type="GO" id="GO:0006412">
    <property type="term" value="P:translation"/>
    <property type="evidence" value="ECO:0007669"/>
    <property type="project" value="InterPro"/>
</dbReference>
<dbReference type="CDD" id="cd07026">
    <property type="entry name" value="Ribosomal_L20"/>
    <property type="match status" value="1"/>
</dbReference>
<dbReference type="FunFam" id="1.10.1900.20:FF:000001">
    <property type="entry name" value="50S ribosomal protein L20"/>
    <property type="match status" value="1"/>
</dbReference>
<dbReference type="Gene3D" id="6.10.160.10">
    <property type="match status" value="1"/>
</dbReference>
<dbReference type="Gene3D" id="1.10.1900.20">
    <property type="entry name" value="Ribosomal protein L20"/>
    <property type="match status" value="1"/>
</dbReference>
<dbReference type="HAMAP" id="MF_00382">
    <property type="entry name" value="Ribosomal_bL20"/>
    <property type="match status" value="1"/>
</dbReference>
<dbReference type="InterPro" id="IPR005813">
    <property type="entry name" value="Ribosomal_bL20"/>
</dbReference>
<dbReference type="InterPro" id="IPR049946">
    <property type="entry name" value="RIBOSOMAL_L20_CS"/>
</dbReference>
<dbReference type="InterPro" id="IPR035566">
    <property type="entry name" value="Ribosomal_protein_bL20_C"/>
</dbReference>
<dbReference type="NCBIfam" id="TIGR01032">
    <property type="entry name" value="rplT_bact"/>
    <property type="match status" value="1"/>
</dbReference>
<dbReference type="PANTHER" id="PTHR10986">
    <property type="entry name" value="39S RIBOSOMAL PROTEIN L20"/>
    <property type="match status" value="1"/>
</dbReference>
<dbReference type="Pfam" id="PF00453">
    <property type="entry name" value="Ribosomal_L20"/>
    <property type="match status" value="1"/>
</dbReference>
<dbReference type="PRINTS" id="PR00062">
    <property type="entry name" value="RIBOSOMALL20"/>
</dbReference>
<dbReference type="SUPFAM" id="SSF74731">
    <property type="entry name" value="Ribosomal protein L20"/>
    <property type="match status" value="1"/>
</dbReference>
<dbReference type="PROSITE" id="PS00937">
    <property type="entry name" value="RIBOSOMAL_L20"/>
    <property type="match status" value="1"/>
</dbReference>
<keyword id="KW-0687">Ribonucleoprotein</keyword>
<keyword id="KW-0689">Ribosomal protein</keyword>
<keyword id="KW-0694">RNA-binding</keyword>
<keyword id="KW-0699">rRNA-binding</keyword>
<evidence type="ECO:0000255" key="1">
    <source>
        <dbReference type="HAMAP-Rule" id="MF_00382"/>
    </source>
</evidence>
<evidence type="ECO:0000305" key="2"/>